<reference key="1">
    <citation type="submission" date="2009-01" db="EMBL/GenBank/DDBJ databases">
        <title>Complete sequence of chromosome of Methylobacterium nodulans ORS 2060.</title>
        <authorList>
            <consortium name="US DOE Joint Genome Institute"/>
            <person name="Lucas S."/>
            <person name="Copeland A."/>
            <person name="Lapidus A."/>
            <person name="Glavina del Rio T."/>
            <person name="Dalin E."/>
            <person name="Tice H."/>
            <person name="Bruce D."/>
            <person name="Goodwin L."/>
            <person name="Pitluck S."/>
            <person name="Sims D."/>
            <person name="Brettin T."/>
            <person name="Detter J.C."/>
            <person name="Han C."/>
            <person name="Larimer F."/>
            <person name="Land M."/>
            <person name="Hauser L."/>
            <person name="Kyrpides N."/>
            <person name="Ivanova N."/>
            <person name="Marx C.J."/>
            <person name="Richardson P."/>
        </authorList>
    </citation>
    <scope>NUCLEOTIDE SEQUENCE [LARGE SCALE GENOMIC DNA]</scope>
    <source>
        <strain>LMG 21967 / CNCM I-2342 / ORS 2060</strain>
    </source>
</reference>
<proteinExistence type="inferred from homology"/>
<dbReference type="EC" id="2.1.1.222" evidence="1"/>
<dbReference type="EC" id="2.1.1.64" evidence="1"/>
<dbReference type="EMBL" id="CP001349">
    <property type="protein sequence ID" value="ACL55155.1"/>
    <property type="molecule type" value="Genomic_DNA"/>
</dbReference>
<dbReference type="RefSeq" id="WP_012634394.1">
    <property type="nucleotide sequence ID" value="NC_011894.1"/>
</dbReference>
<dbReference type="SMR" id="B8IUB0"/>
<dbReference type="STRING" id="460265.Mnod_0108"/>
<dbReference type="KEGG" id="mno:Mnod_0108"/>
<dbReference type="eggNOG" id="COG2227">
    <property type="taxonomic scope" value="Bacteria"/>
</dbReference>
<dbReference type="HOGENOM" id="CLU_042432_0_0_5"/>
<dbReference type="OrthoDB" id="9801538at2"/>
<dbReference type="UniPathway" id="UPA00232"/>
<dbReference type="Proteomes" id="UP000008207">
    <property type="component" value="Chromosome"/>
</dbReference>
<dbReference type="GO" id="GO:0102208">
    <property type="term" value="F:2-polyprenyl-6-hydroxyphenol methylase activity"/>
    <property type="evidence" value="ECO:0007669"/>
    <property type="project" value="UniProtKB-EC"/>
</dbReference>
<dbReference type="GO" id="GO:0061542">
    <property type="term" value="F:3-demethylubiquinol 3-O-methyltransferase activity"/>
    <property type="evidence" value="ECO:0007669"/>
    <property type="project" value="UniProtKB-UniRule"/>
</dbReference>
<dbReference type="GO" id="GO:0010420">
    <property type="term" value="F:polyprenyldihydroxybenzoate methyltransferase activity"/>
    <property type="evidence" value="ECO:0007669"/>
    <property type="project" value="InterPro"/>
</dbReference>
<dbReference type="GO" id="GO:0032259">
    <property type="term" value="P:methylation"/>
    <property type="evidence" value="ECO:0007669"/>
    <property type="project" value="UniProtKB-KW"/>
</dbReference>
<dbReference type="CDD" id="cd02440">
    <property type="entry name" value="AdoMet_MTases"/>
    <property type="match status" value="1"/>
</dbReference>
<dbReference type="Gene3D" id="3.40.50.150">
    <property type="entry name" value="Vaccinia Virus protein VP39"/>
    <property type="match status" value="1"/>
</dbReference>
<dbReference type="HAMAP" id="MF_00472">
    <property type="entry name" value="UbiG"/>
    <property type="match status" value="1"/>
</dbReference>
<dbReference type="InterPro" id="IPR029063">
    <property type="entry name" value="SAM-dependent_MTases_sf"/>
</dbReference>
<dbReference type="InterPro" id="IPR010233">
    <property type="entry name" value="UbiG_MeTrfase"/>
</dbReference>
<dbReference type="NCBIfam" id="TIGR01983">
    <property type="entry name" value="UbiG"/>
    <property type="match status" value="1"/>
</dbReference>
<dbReference type="PANTHER" id="PTHR43464">
    <property type="entry name" value="METHYLTRANSFERASE"/>
    <property type="match status" value="1"/>
</dbReference>
<dbReference type="PANTHER" id="PTHR43464:SF19">
    <property type="entry name" value="UBIQUINONE BIOSYNTHESIS O-METHYLTRANSFERASE, MITOCHONDRIAL"/>
    <property type="match status" value="1"/>
</dbReference>
<dbReference type="Pfam" id="PF13489">
    <property type="entry name" value="Methyltransf_23"/>
    <property type="match status" value="1"/>
</dbReference>
<dbReference type="SUPFAM" id="SSF53335">
    <property type="entry name" value="S-adenosyl-L-methionine-dependent methyltransferases"/>
    <property type="match status" value="1"/>
</dbReference>
<organism>
    <name type="scientific">Methylobacterium nodulans (strain LMG 21967 / CNCM I-2342 / ORS 2060)</name>
    <dbReference type="NCBI Taxonomy" id="460265"/>
    <lineage>
        <taxon>Bacteria</taxon>
        <taxon>Pseudomonadati</taxon>
        <taxon>Pseudomonadota</taxon>
        <taxon>Alphaproteobacteria</taxon>
        <taxon>Hyphomicrobiales</taxon>
        <taxon>Methylobacteriaceae</taxon>
        <taxon>Methylobacterium</taxon>
    </lineage>
</organism>
<evidence type="ECO:0000255" key="1">
    <source>
        <dbReference type="HAMAP-Rule" id="MF_00472"/>
    </source>
</evidence>
<name>UBIG_METNO</name>
<comment type="function">
    <text evidence="1">O-methyltransferase that catalyzes the 2 O-methylation steps in the ubiquinone biosynthetic pathway.</text>
</comment>
<comment type="catalytic activity">
    <reaction evidence="1">
        <text>a 3-demethylubiquinol + S-adenosyl-L-methionine = a ubiquinol + S-adenosyl-L-homocysteine + H(+)</text>
        <dbReference type="Rhea" id="RHEA:44380"/>
        <dbReference type="Rhea" id="RHEA-COMP:9566"/>
        <dbReference type="Rhea" id="RHEA-COMP:10914"/>
        <dbReference type="ChEBI" id="CHEBI:15378"/>
        <dbReference type="ChEBI" id="CHEBI:17976"/>
        <dbReference type="ChEBI" id="CHEBI:57856"/>
        <dbReference type="ChEBI" id="CHEBI:59789"/>
        <dbReference type="ChEBI" id="CHEBI:84422"/>
        <dbReference type="EC" id="2.1.1.64"/>
    </reaction>
</comment>
<comment type="catalytic activity">
    <reaction evidence="1">
        <text>a 3-(all-trans-polyprenyl)benzene-1,2-diol + S-adenosyl-L-methionine = a 2-methoxy-6-(all-trans-polyprenyl)phenol + S-adenosyl-L-homocysteine + H(+)</text>
        <dbReference type="Rhea" id="RHEA:31411"/>
        <dbReference type="Rhea" id="RHEA-COMP:9550"/>
        <dbReference type="Rhea" id="RHEA-COMP:9551"/>
        <dbReference type="ChEBI" id="CHEBI:15378"/>
        <dbReference type="ChEBI" id="CHEBI:57856"/>
        <dbReference type="ChEBI" id="CHEBI:59789"/>
        <dbReference type="ChEBI" id="CHEBI:62729"/>
        <dbReference type="ChEBI" id="CHEBI:62731"/>
        <dbReference type="EC" id="2.1.1.222"/>
    </reaction>
</comment>
<comment type="pathway">
    <text evidence="1">Cofactor biosynthesis; ubiquinone biosynthesis.</text>
</comment>
<comment type="similarity">
    <text evidence="1">Belongs to the methyltransferase superfamily. UbiG/COQ3 family.</text>
</comment>
<accession>B8IUB0</accession>
<gene>
    <name evidence="1" type="primary">ubiG</name>
    <name type="ordered locus">Mnod_0108</name>
</gene>
<keyword id="KW-0489">Methyltransferase</keyword>
<keyword id="KW-1185">Reference proteome</keyword>
<keyword id="KW-0949">S-adenosyl-L-methionine</keyword>
<keyword id="KW-0808">Transferase</keyword>
<keyword id="KW-0831">Ubiquinone biosynthesis</keyword>
<protein>
    <recommendedName>
        <fullName evidence="1">Ubiquinone biosynthesis O-methyltransferase</fullName>
    </recommendedName>
    <alternativeName>
        <fullName evidence="1">2-polyprenyl-6-hydroxyphenol methylase</fullName>
        <ecNumber evidence="1">2.1.1.222</ecNumber>
    </alternativeName>
    <alternativeName>
        <fullName evidence="1">3-demethylubiquinone 3-O-methyltransferase</fullName>
        <ecNumber evidence="1">2.1.1.64</ecNumber>
    </alternativeName>
</protein>
<feature type="chain" id="PRO_1000135507" description="Ubiquinone biosynthesis O-methyltransferase">
    <location>
        <begin position="1"/>
        <end position="249"/>
    </location>
</feature>
<feature type="binding site" evidence="1">
    <location>
        <position position="41"/>
    </location>
    <ligand>
        <name>S-adenosyl-L-methionine</name>
        <dbReference type="ChEBI" id="CHEBI:59789"/>
    </ligand>
</feature>
<feature type="binding site" evidence="1">
    <location>
        <position position="72"/>
    </location>
    <ligand>
        <name>S-adenosyl-L-methionine</name>
        <dbReference type="ChEBI" id="CHEBI:59789"/>
    </ligand>
</feature>
<feature type="binding site" evidence="1">
    <location>
        <position position="93"/>
    </location>
    <ligand>
        <name>S-adenosyl-L-methionine</name>
        <dbReference type="ChEBI" id="CHEBI:59789"/>
    </ligand>
</feature>
<feature type="binding site" evidence="1">
    <location>
        <position position="136"/>
    </location>
    <ligand>
        <name>S-adenosyl-L-methionine</name>
        <dbReference type="ChEBI" id="CHEBI:59789"/>
    </ligand>
</feature>
<sequence>MSETTGPSIDRDEVARFERIAATWWDEAGPMRVLHRFNPVRITYIRDTVCRHFGRDPRRPLPLEALSLIDIGCGGGILSEPLARLGATVTGLDPAPTNIRVAQAHAAEAGVPVDYRGQTIEAVVEAGERFDVVLAMEVVEHVVDMPAFVRTACAAVKPGGLFFAATLNRTMRSFALAIVGAEYVLGWLPRGTHDWEKFVTPAELTGAVESAGLTVIDTTGVVYNPLGGRWAMSRDTGVNYMIAAERPVA</sequence>